<protein>
    <recommendedName>
        <fullName evidence="1">Trigger factor</fullName>
        <shortName evidence="1">TF</shortName>
        <ecNumber evidence="1">5.2.1.8</ecNumber>
    </recommendedName>
    <alternativeName>
        <fullName evidence="1">PPIase</fullName>
    </alternativeName>
</protein>
<keyword id="KW-0131">Cell cycle</keyword>
<keyword id="KW-0132">Cell division</keyword>
<keyword id="KW-0143">Chaperone</keyword>
<keyword id="KW-0963">Cytoplasm</keyword>
<keyword id="KW-0413">Isomerase</keyword>
<keyword id="KW-1185">Reference proteome</keyword>
<keyword id="KW-0697">Rotamase</keyword>
<comment type="function">
    <text evidence="1">Involved in protein export. Acts as a chaperone by maintaining the newly synthesized protein in an open conformation. Functions as a peptidyl-prolyl cis-trans isomerase.</text>
</comment>
<comment type="catalytic activity">
    <reaction evidence="1">
        <text>[protein]-peptidylproline (omega=180) = [protein]-peptidylproline (omega=0)</text>
        <dbReference type="Rhea" id="RHEA:16237"/>
        <dbReference type="Rhea" id="RHEA-COMP:10747"/>
        <dbReference type="Rhea" id="RHEA-COMP:10748"/>
        <dbReference type="ChEBI" id="CHEBI:83833"/>
        <dbReference type="ChEBI" id="CHEBI:83834"/>
        <dbReference type="EC" id="5.2.1.8"/>
    </reaction>
</comment>
<comment type="subcellular location">
    <subcellularLocation>
        <location>Cytoplasm</location>
    </subcellularLocation>
    <text evidence="1">About half TF is bound to the ribosome near the polypeptide exit tunnel while the other half is free in the cytoplasm.</text>
</comment>
<comment type="domain">
    <text evidence="1">Consists of 3 domains; the N-terminus binds the ribosome, the middle domain has PPIase activity, while the C-terminus has intrinsic chaperone activity on its own.</text>
</comment>
<comment type="similarity">
    <text evidence="1">Belongs to the FKBP-type PPIase family. Tig subfamily.</text>
</comment>
<accession>Q7V9L7</accession>
<gene>
    <name evidence="1" type="primary">tig</name>
    <name type="ordered locus">Pro_1815</name>
</gene>
<reference key="1">
    <citation type="journal article" date="2003" name="Proc. Natl. Acad. Sci. U.S.A.">
        <title>Genome sequence of the cyanobacterium Prochlorococcus marinus SS120, a nearly minimal oxyphototrophic genome.</title>
        <authorList>
            <person name="Dufresne A."/>
            <person name="Salanoubat M."/>
            <person name="Partensky F."/>
            <person name="Artiguenave F."/>
            <person name="Axmann I.M."/>
            <person name="Barbe V."/>
            <person name="Duprat S."/>
            <person name="Galperin M.Y."/>
            <person name="Koonin E.V."/>
            <person name="Le Gall F."/>
            <person name="Makarova K.S."/>
            <person name="Ostrowski M."/>
            <person name="Oztas S."/>
            <person name="Robert C."/>
            <person name="Rogozin I.B."/>
            <person name="Scanlan D.J."/>
            <person name="Tandeau de Marsac N."/>
            <person name="Weissenbach J."/>
            <person name="Wincker P."/>
            <person name="Wolf Y.I."/>
            <person name="Hess W.R."/>
        </authorList>
    </citation>
    <scope>NUCLEOTIDE SEQUENCE [LARGE SCALE GENOMIC DNA]</scope>
    <source>
        <strain>SARG / CCMP1375 / SS120</strain>
    </source>
</reference>
<organism>
    <name type="scientific">Prochlorococcus marinus (strain SARG / CCMP1375 / SS120)</name>
    <dbReference type="NCBI Taxonomy" id="167539"/>
    <lineage>
        <taxon>Bacteria</taxon>
        <taxon>Bacillati</taxon>
        <taxon>Cyanobacteriota</taxon>
        <taxon>Cyanophyceae</taxon>
        <taxon>Synechococcales</taxon>
        <taxon>Prochlorococcaceae</taxon>
        <taxon>Prochlorococcus</taxon>
    </lineage>
</organism>
<sequence length="467" mass="52596">MSNSQLKIKTKALPNSRIAIEFEVPAQQCKTSFEDALTTLCKSANLPGFRKGKVPKSVILQQIGSKRIQASALEKLLEKIWKQALKEESIEPLCEPELAGGFEPLLENFNPEQTLSVTLETDVAPIPKLKTTKGLTTEAEPITFDESKVDELIEESRKQLATVIPVENRPANHSDIAILTFKGTFADDGSEIEGGSGESMEIDLEEGRMIPGFIEGIVGMKINETKTIDCQFPKDYQDEKAKGRKAKFDIQLQDLKTRELPKLDDDFAKQASDKNSLKELRNELTNRLKSDAKNRNKKNRQESLLEALVKELEVDLPKTLIDEEVRNLIEQTARNFAEQGMDIKSTFTQDLVSSLMESSRPEAEINLKKNLALNALAEAENIKVDSQALEEKIKEVNIELANQKNIDQKKLRQVVQNDLLQEKLFDWLEANNTILEKKPKKALNEKVKSSKPKNTQKKTDKTKKDSP</sequence>
<evidence type="ECO:0000255" key="1">
    <source>
        <dbReference type="HAMAP-Rule" id="MF_00303"/>
    </source>
</evidence>
<evidence type="ECO:0000256" key="2">
    <source>
        <dbReference type="SAM" id="MobiDB-lite"/>
    </source>
</evidence>
<feature type="chain" id="PRO_0000179404" description="Trigger factor">
    <location>
        <begin position="1"/>
        <end position="467"/>
    </location>
</feature>
<feature type="domain" description="PPIase FKBP-type" evidence="1">
    <location>
        <begin position="174"/>
        <end position="261"/>
    </location>
</feature>
<feature type="region of interest" description="Disordered" evidence="2">
    <location>
        <begin position="439"/>
        <end position="467"/>
    </location>
</feature>
<feature type="compositionally biased region" description="Basic and acidic residues" evidence="2">
    <location>
        <begin position="457"/>
        <end position="467"/>
    </location>
</feature>
<dbReference type="EC" id="5.2.1.8" evidence="1"/>
<dbReference type="EMBL" id="AE017126">
    <property type="protein sequence ID" value="AAQ00859.1"/>
    <property type="molecule type" value="Genomic_DNA"/>
</dbReference>
<dbReference type="RefSeq" id="NP_876206.1">
    <property type="nucleotide sequence ID" value="NC_005042.1"/>
</dbReference>
<dbReference type="RefSeq" id="WP_011125964.1">
    <property type="nucleotide sequence ID" value="NC_005042.1"/>
</dbReference>
<dbReference type="SMR" id="Q7V9L7"/>
<dbReference type="STRING" id="167539.Pro_1815"/>
<dbReference type="EnsemblBacteria" id="AAQ00859">
    <property type="protein sequence ID" value="AAQ00859"/>
    <property type="gene ID" value="Pro_1815"/>
</dbReference>
<dbReference type="KEGG" id="pma:Pro_1815"/>
<dbReference type="PATRIC" id="fig|167539.5.peg.1917"/>
<dbReference type="eggNOG" id="COG0544">
    <property type="taxonomic scope" value="Bacteria"/>
</dbReference>
<dbReference type="HOGENOM" id="CLU_033058_3_1_3"/>
<dbReference type="OrthoDB" id="9767721at2"/>
<dbReference type="Proteomes" id="UP000001420">
    <property type="component" value="Chromosome"/>
</dbReference>
<dbReference type="GO" id="GO:0005737">
    <property type="term" value="C:cytoplasm"/>
    <property type="evidence" value="ECO:0007669"/>
    <property type="project" value="UniProtKB-SubCell"/>
</dbReference>
<dbReference type="GO" id="GO:0003755">
    <property type="term" value="F:peptidyl-prolyl cis-trans isomerase activity"/>
    <property type="evidence" value="ECO:0007669"/>
    <property type="project" value="UniProtKB-UniRule"/>
</dbReference>
<dbReference type="GO" id="GO:0044183">
    <property type="term" value="F:protein folding chaperone"/>
    <property type="evidence" value="ECO:0007669"/>
    <property type="project" value="TreeGrafter"/>
</dbReference>
<dbReference type="GO" id="GO:0043022">
    <property type="term" value="F:ribosome binding"/>
    <property type="evidence" value="ECO:0007669"/>
    <property type="project" value="TreeGrafter"/>
</dbReference>
<dbReference type="GO" id="GO:0051083">
    <property type="term" value="P:'de novo' cotranslational protein folding"/>
    <property type="evidence" value="ECO:0007669"/>
    <property type="project" value="TreeGrafter"/>
</dbReference>
<dbReference type="GO" id="GO:0051301">
    <property type="term" value="P:cell division"/>
    <property type="evidence" value="ECO:0007669"/>
    <property type="project" value="UniProtKB-KW"/>
</dbReference>
<dbReference type="GO" id="GO:0061077">
    <property type="term" value="P:chaperone-mediated protein folding"/>
    <property type="evidence" value="ECO:0007669"/>
    <property type="project" value="TreeGrafter"/>
</dbReference>
<dbReference type="GO" id="GO:0015031">
    <property type="term" value="P:protein transport"/>
    <property type="evidence" value="ECO:0007669"/>
    <property type="project" value="UniProtKB-UniRule"/>
</dbReference>
<dbReference type="GO" id="GO:0043335">
    <property type="term" value="P:protein unfolding"/>
    <property type="evidence" value="ECO:0007669"/>
    <property type="project" value="TreeGrafter"/>
</dbReference>
<dbReference type="FunFam" id="3.10.50.40:FF:000001">
    <property type="entry name" value="Trigger factor"/>
    <property type="match status" value="1"/>
</dbReference>
<dbReference type="FunFam" id="3.30.70.1050:FF:000004">
    <property type="entry name" value="Trigger factor"/>
    <property type="match status" value="1"/>
</dbReference>
<dbReference type="Gene3D" id="3.10.50.40">
    <property type="match status" value="1"/>
</dbReference>
<dbReference type="Gene3D" id="3.30.70.1050">
    <property type="entry name" value="Trigger factor ribosome-binding domain"/>
    <property type="match status" value="1"/>
</dbReference>
<dbReference type="Gene3D" id="1.10.3120.10">
    <property type="entry name" value="Trigger factor, C-terminal domain"/>
    <property type="match status" value="1"/>
</dbReference>
<dbReference type="HAMAP" id="MF_00303">
    <property type="entry name" value="Trigger_factor_Tig"/>
    <property type="match status" value="1"/>
</dbReference>
<dbReference type="InterPro" id="IPR046357">
    <property type="entry name" value="PPIase_dom_sf"/>
</dbReference>
<dbReference type="InterPro" id="IPR001179">
    <property type="entry name" value="PPIase_FKBP_dom"/>
</dbReference>
<dbReference type="InterPro" id="IPR005215">
    <property type="entry name" value="Trig_fac"/>
</dbReference>
<dbReference type="InterPro" id="IPR008880">
    <property type="entry name" value="Trigger_fac_C"/>
</dbReference>
<dbReference type="InterPro" id="IPR037041">
    <property type="entry name" value="Trigger_fac_C_sf"/>
</dbReference>
<dbReference type="InterPro" id="IPR008881">
    <property type="entry name" value="Trigger_fac_ribosome-bd_bac"/>
</dbReference>
<dbReference type="InterPro" id="IPR036611">
    <property type="entry name" value="Trigger_fac_ribosome-bd_sf"/>
</dbReference>
<dbReference type="InterPro" id="IPR027304">
    <property type="entry name" value="Trigger_fact/SurA_dom_sf"/>
</dbReference>
<dbReference type="NCBIfam" id="TIGR00115">
    <property type="entry name" value="tig"/>
    <property type="match status" value="1"/>
</dbReference>
<dbReference type="PANTHER" id="PTHR30560">
    <property type="entry name" value="TRIGGER FACTOR CHAPERONE AND PEPTIDYL-PROLYL CIS/TRANS ISOMERASE"/>
    <property type="match status" value="1"/>
</dbReference>
<dbReference type="PANTHER" id="PTHR30560:SF3">
    <property type="entry name" value="TRIGGER FACTOR-LIKE PROTEIN TIG, CHLOROPLASTIC"/>
    <property type="match status" value="1"/>
</dbReference>
<dbReference type="Pfam" id="PF00254">
    <property type="entry name" value="FKBP_C"/>
    <property type="match status" value="1"/>
</dbReference>
<dbReference type="Pfam" id="PF05698">
    <property type="entry name" value="Trigger_C"/>
    <property type="match status" value="1"/>
</dbReference>
<dbReference type="Pfam" id="PF05697">
    <property type="entry name" value="Trigger_N"/>
    <property type="match status" value="1"/>
</dbReference>
<dbReference type="PIRSF" id="PIRSF003095">
    <property type="entry name" value="Trigger_factor"/>
    <property type="match status" value="1"/>
</dbReference>
<dbReference type="SUPFAM" id="SSF54534">
    <property type="entry name" value="FKBP-like"/>
    <property type="match status" value="1"/>
</dbReference>
<dbReference type="SUPFAM" id="SSF109998">
    <property type="entry name" value="Triger factor/SurA peptide-binding domain-like"/>
    <property type="match status" value="1"/>
</dbReference>
<dbReference type="SUPFAM" id="SSF102735">
    <property type="entry name" value="Trigger factor ribosome-binding domain"/>
    <property type="match status" value="1"/>
</dbReference>
<dbReference type="PROSITE" id="PS50059">
    <property type="entry name" value="FKBP_PPIASE"/>
    <property type="match status" value="1"/>
</dbReference>
<proteinExistence type="inferred from homology"/>
<name>TIG_PROMA</name>